<keyword id="KW-0227">DNA damage</keyword>
<keyword id="KW-0234">DNA repair</keyword>
<keyword id="KW-0235">DNA replication</keyword>
<keyword id="KW-0436">Ligase</keyword>
<keyword id="KW-0460">Magnesium</keyword>
<keyword id="KW-0464">Manganese</keyword>
<keyword id="KW-0479">Metal-binding</keyword>
<keyword id="KW-0520">NAD</keyword>
<keyword id="KW-1185">Reference proteome</keyword>
<keyword id="KW-0862">Zinc</keyword>
<proteinExistence type="inferred from homology"/>
<organism>
    <name type="scientific">Streptococcus pneumoniae (strain ATCC BAA-255 / R6)</name>
    <dbReference type="NCBI Taxonomy" id="171101"/>
    <lineage>
        <taxon>Bacteria</taxon>
        <taxon>Bacillati</taxon>
        <taxon>Bacillota</taxon>
        <taxon>Bacilli</taxon>
        <taxon>Lactobacillales</taxon>
        <taxon>Streptococcaceae</taxon>
        <taxon>Streptococcus</taxon>
    </lineage>
</organism>
<accession>Q8DPS9</accession>
<reference key="1">
    <citation type="journal article" date="2001" name="J. Bacteriol.">
        <title>Genome of the bacterium Streptococcus pneumoniae strain R6.</title>
        <authorList>
            <person name="Hoskins J."/>
            <person name="Alborn W.E. Jr."/>
            <person name="Arnold J."/>
            <person name="Blaszczak L.C."/>
            <person name="Burgett S."/>
            <person name="DeHoff B.S."/>
            <person name="Estrem S.T."/>
            <person name="Fritz L."/>
            <person name="Fu D.-J."/>
            <person name="Fuller W."/>
            <person name="Geringer C."/>
            <person name="Gilmour R."/>
            <person name="Glass J.S."/>
            <person name="Khoja H."/>
            <person name="Kraft A.R."/>
            <person name="Lagace R.E."/>
            <person name="LeBlanc D.J."/>
            <person name="Lee L.N."/>
            <person name="Lefkowitz E.J."/>
            <person name="Lu J."/>
            <person name="Matsushima P."/>
            <person name="McAhren S.M."/>
            <person name="McHenney M."/>
            <person name="McLeaster K."/>
            <person name="Mundy C.W."/>
            <person name="Nicas T.I."/>
            <person name="Norris F.H."/>
            <person name="O'Gara M."/>
            <person name="Peery R.B."/>
            <person name="Robertson G.T."/>
            <person name="Rockey P."/>
            <person name="Sun P.-M."/>
            <person name="Winkler M.E."/>
            <person name="Yang Y."/>
            <person name="Young-Bellido M."/>
            <person name="Zhao G."/>
            <person name="Zook C.A."/>
            <person name="Baltz R.H."/>
            <person name="Jaskunas S.R."/>
            <person name="Rosteck P.R. Jr."/>
            <person name="Skatrud P.L."/>
            <person name="Glass J.I."/>
        </authorList>
    </citation>
    <scope>NUCLEOTIDE SEQUENCE [LARGE SCALE GENOMIC DNA]</scope>
    <source>
        <strain>ATCC BAA-255 / R6</strain>
    </source>
</reference>
<name>DNLJ_STRR6</name>
<evidence type="ECO:0000255" key="1">
    <source>
        <dbReference type="HAMAP-Rule" id="MF_01588"/>
    </source>
</evidence>
<gene>
    <name evidence="1" type="primary">ligA</name>
    <name type="ordered locus">spr1024</name>
</gene>
<dbReference type="EC" id="6.5.1.2" evidence="1"/>
<dbReference type="EMBL" id="AE007317">
    <property type="protein sequence ID" value="AAK99828.1"/>
    <property type="molecule type" value="Genomic_DNA"/>
</dbReference>
<dbReference type="PIR" id="H97999">
    <property type="entry name" value="H97999"/>
</dbReference>
<dbReference type="RefSeq" id="NP_358618.1">
    <property type="nucleotide sequence ID" value="NC_003098.1"/>
</dbReference>
<dbReference type="RefSeq" id="WP_001042588.1">
    <property type="nucleotide sequence ID" value="NC_003098.1"/>
</dbReference>
<dbReference type="SMR" id="Q8DPS9"/>
<dbReference type="STRING" id="171101.spr1024"/>
<dbReference type="KEGG" id="spr:spr1024"/>
<dbReference type="PATRIC" id="fig|171101.6.peg.1114"/>
<dbReference type="eggNOG" id="COG0272">
    <property type="taxonomic scope" value="Bacteria"/>
</dbReference>
<dbReference type="HOGENOM" id="CLU_007764_2_1_9"/>
<dbReference type="Proteomes" id="UP000000586">
    <property type="component" value="Chromosome"/>
</dbReference>
<dbReference type="GO" id="GO:0005829">
    <property type="term" value="C:cytosol"/>
    <property type="evidence" value="ECO:0000318"/>
    <property type="project" value="GO_Central"/>
</dbReference>
<dbReference type="GO" id="GO:0003677">
    <property type="term" value="F:DNA binding"/>
    <property type="evidence" value="ECO:0007669"/>
    <property type="project" value="InterPro"/>
</dbReference>
<dbReference type="GO" id="GO:0003911">
    <property type="term" value="F:DNA ligase (NAD+) activity"/>
    <property type="evidence" value="ECO:0000318"/>
    <property type="project" value="GO_Central"/>
</dbReference>
<dbReference type="GO" id="GO:0046872">
    <property type="term" value="F:metal ion binding"/>
    <property type="evidence" value="ECO:0007669"/>
    <property type="project" value="UniProtKB-KW"/>
</dbReference>
<dbReference type="GO" id="GO:0006281">
    <property type="term" value="P:DNA repair"/>
    <property type="evidence" value="ECO:0007669"/>
    <property type="project" value="UniProtKB-KW"/>
</dbReference>
<dbReference type="GO" id="GO:0006260">
    <property type="term" value="P:DNA replication"/>
    <property type="evidence" value="ECO:0007669"/>
    <property type="project" value="UniProtKB-KW"/>
</dbReference>
<dbReference type="CDD" id="cd17748">
    <property type="entry name" value="BRCT_DNA_ligase_like"/>
    <property type="match status" value="1"/>
</dbReference>
<dbReference type="CDD" id="cd00114">
    <property type="entry name" value="LIGANc"/>
    <property type="match status" value="1"/>
</dbReference>
<dbReference type="FunFam" id="1.10.150.20:FF:000006">
    <property type="entry name" value="DNA ligase"/>
    <property type="match status" value="1"/>
</dbReference>
<dbReference type="FunFam" id="1.10.150.20:FF:000007">
    <property type="entry name" value="DNA ligase"/>
    <property type="match status" value="1"/>
</dbReference>
<dbReference type="FunFam" id="1.10.287.610:FF:000002">
    <property type="entry name" value="DNA ligase"/>
    <property type="match status" value="1"/>
</dbReference>
<dbReference type="FunFam" id="2.40.50.140:FF:000012">
    <property type="entry name" value="DNA ligase"/>
    <property type="match status" value="1"/>
</dbReference>
<dbReference type="FunFam" id="3.30.470.30:FF:000001">
    <property type="entry name" value="DNA ligase"/>
    <property type="match status" value="1"/>
</dbReference>
<dbReference type="FunFam" id="3.40.50.10190:FF:000045">
    <property type="entry name" value="DNA ligase"/>
    <property type="match status" value="1"/>
</dbReference>
<dbReference type="Gene3D" id="6.20.10.30">
    <property type="match status" value="1"/>
</dbReference>
<dbReference type="Gene3D" id="1.10.150.20">
    <property type="entry name" value="5' to 3' exonuclease, C-terminal subdomain"/>
    <property type="match status" value="2"/>
</dbReference>
<dbReference type="Gene3D" id="3.40.50.10190">
    <property type="entry name" value="BRCT domain"/>
    <property type="match status" value="1"/>
</dbReference>
<dbReference type="Gene3D" id="3.30.470.30">
    <property type="entry name" value="DNA ligase/mRNA capping enzyme"/>
    <property type="match status" value="1"/>
</dbReference>
<dbReference type="Gene3D" id="1.10.287.610">
    <property type="entry name" value="Helix hairpin bin"/>
    <property type="match status" value="1"/>
</dbReference>
<dbReference type="Gene3D" id="2.40.50.140">
    <property type="entry name" value="Nucleic acid-binding proteins"/>
    <property type="match status" value="1"/>
</dbReference>
<dbReference type="HAMAP" id="MF_01588">
    <property type="entry name" value="DNA_ligase_A"/>
    <property type="match status" value="1"/>
</dbReference>
<dbReference type="InterPro" id="IPR001357">
    <property type="entry name" value="BRCT_dom"/>
</dbReference>
<dbReference type="InterPro" id="IPR036420">
    <property type="entry name" value="BRCT_dom_sf"/>
</dbReference>
<dbReference type="InterPro" id="IPR041663">
    <property type="entry name" value="DisA/LigA_HHH"/>
</dbReference>
<dbReference type="InterPro" id="IPR001679">
    <property type="entry name" value="DNA_ligase"/>
</dbReference>
<dbReference type="InterPro" id="IPR018239">
    <property type="entry name" value="DNA_ligase_AS"/>
</dbReference>
<dbReference type="InterPro" id="IPR033136">
    <property type="entry name" value="DNA_ligase_CS"/>
</dbReference>
<dbReference type="InterPro" id="IPR013839">
    <property type="entry name" value="DNAligase_adenylation"/>
</dbReference>
<dbReference type="InterPro" id="IPR013840">
    <property type="entry name" value="DNAligase_N"/>
</dbReference>
<dbReference type="InterPro" id="IPR003583">
    <property type="entry name" value="Hlx-hairpin-Hlx_DNA-bd_motif"/>
</dbReference>
<dbReference type="InterPro" id="IPR012340">
    <property type="entry name" value="NA-bd_OB-fold"/>
</dbReference>
<dbReference type="InterPro" id="IPR004150">
    <property type="entry name" value="NAD_DNA_ligase_OB"/>
</dbReference>
<dbReference type="InterPro" id="IPR010994">
    <property type="entry name" value="RuvA_2-like"/>
</dbReference>
<dbReference type="InterPro" id="IPR004149">
    <property type="entry name" value="Znf_DNAligase_C4"/>
</dbReference>
<dbReference type="NCBIfam" id="TIGR00575">
    <property type="entry name" value="dnlj"/>
    <property type="match status" value="1"/>
</dbReference>
<dbReference type="NCBIfam" id="NF005932">
    <property type="entry name" value="PRK07956.1"/>
    <property type="match status" value="1"/>
</dbReference>
<dbReference type="PANTHER" id="PTHR23389">
    <property type="entry name" value="CHROMOSOME TRANSMISSION FIDELITY FACTOR 18"/>
    <property type="match status" value="1"/>
</dbReference>
<dbReference type="PANTHER" id="PTHR23389:SF9">
    <property type="entry name" value="DNA LIGASE"/>
    <property type="match status" value="1"/>
</dbReference>
<dbReference type="Pfam" id="PF00533">
    <property type="entry name" value="BRCT"/>
    <property type="match status" value="1"/>
</dbReference>
<dbReference type="Pfam" id="PF01653">
    <property type="entry name" value="DNA_ligase_aden"/>
    <property type="match status" value="1"/>
</dbReference>
<dbReference type="Pfam" id="PF03120">
    <property type="entry name" value="DNA_ligase_OB"/>
    <property type="match status" value="1"/>
</dbReference>
<dbReference type="Pfam" id="PF03119">
    <property type="entry name" value="DNA_ligase_ZBD"/>
    <property type="match status" value="1"/>
</dbReference>
<dbReference type="Pfam" id="PF12826">
    <property type="entry name" value="HHH_2"/>
    <property type="match status" value="1"/>
</dbReference>
<dbReference type="Pfam" id="PF14520">
    <property type="entry name" value="HHH_5"/>
    <property type="match status" value="1"/>
</dbReference>
<dbReference type="PIRSF" id="PIRSF001604">
    <property type="entry name" value="LigA"/>
    <property type="match status" value="1"/>
</dbReference>
<dbReference type="SMART" id="SM00292">
    <property type="entry name" value="BRCT"/>
    <property type="match status" value="1"/>
</dbReference>
<dbReference type="SMART" id="SM00278">
    <property type="entry name" value="HhH1"/>
    <property type="match status" value="2"/>
</dbReference>
<dbReference type="SMART" id="SM00532">
    <property type="entry name" value="LIGANc"/>
    <property type="match status" value="1"/>
</dbReference>
<dbReference type="SUPFAM" id="SSF52113">
    <property type="entry name" value="BRCT domain"/>
    <property type="match status" value="1"/>
</dbReference>
<dbReference type="SUPFAM" id="SSF56091">
    <property type="entry name" value="DNA ligase/mRNA capping enzyme, catalytic domain"/>
    <property type="match status" value="1"/>
</dbReference>
<dbReference type="SUPFAM" id="SSF50249">
    <property type="entry name" value="Nucleic acid-binding proteins"/>
    <property type="match status" value="1"/>
</dbReference>
<dbReference type="SUPFAM" id="SSF47781">
    <property type="entry name" value="RuvA domain 2-like"/>
    <property type="match status" value="1"/>
</dbReference>
<dbReference type="PROSITE" id="PS50172">
    <property type="entry name" value="BRCT"/>
    <property type="match status" value="1"/>
</dbReference>
<dbReference type="PROSITE" id="PS01055">
    <property type="entry name" value="DNA_LIGASE_N1"/>
    <property type="match status" value="1"/>
</dbReference>
<dbReference type="PROSITE" id="PS01056">
    <property type="entry name" value="DNA_LIGASE_N2"/>
    <property type="match status" value="1"/>
</dbReference>
<protein>
    <recommendedName>
        <fullName evidence="1">DNA ligase</fullName>
        <ecNumber evidence="1">6.5.1.2</ecNumber>
    </recommendedName>
    <alternativeName>
        <fullName evidence="1">Polydeoxyribonucleotide synthase [NAD(+)]</fullName>
    </alternativeName>
</protein>
<comment type="function">
    <text evidence="1">DNA ligase that catalyzes the formation of phosphodiester linkages between 5'-phosphoryl and 3'-hydroxyl groups in double-stranded DNA using NAD as a coenzyme and as the energy source for the reaction. It is essential for DNA replication and repair of damaged DNA.</text>
</comment>
<comment type="catalytic activity">
    <reaction evidence="1">
        <text>NAD(+) + (deoxyribonucleotide)n-3'-hydroxyl + 5'-phospho-(deoxyribonucleotide)m = (deoxyribonucleotide)n+m + AMP + beta-nicotinamide D-nucleotide.</text>
        <dbReference type="EC" id="6.5.1.2"/>
    </reaction>
</comment>
<comment type="cofactor">
    <cofactor evidence="1">
        <name>Mg(2+)</name>
        <dbReference type="ChEBI" id="CHEBI:18420"/>
    </cofactor>
    <cofactor evidence="1">
        <name>Mn(2+)</name>
        <dbReference type="ChEBI" id="CHEBI:29035"/>
    </cofactor>
</comment>
<comment type="similarity">
    <text evidence="1">Belongs to the NAD-dependent DNA ligase family. LigA subfamily.</text>
</comment>
<feature type="chain" id="PRO_0000313455" description="DNA ligase">
    <location>
        <begin position="1"/>
        <end position="652"/>
    </location>
</feature>
<feature type="domain" description="BRCT" evidence="1">
    <location>
        <begin position="577"/>
        <end position="652"/>
    </location>
</feature>
<feature type="active site" description="N6-AMP-lysine intermediate" evidence="1">
    <location>
        <position position="109"/>
    </location>
</feature>
<feature type="binding site" evidence="1">
    <location>
        <begin position="29"/>
        <end position="33"/>
    </location>
    <ligand>
        <name>NAD(+)</name>
        <dbReference type="ChEBI" id="CHEBI:57540"/>
    </ligand>
</feature>
<feature type="binding site" evidence="1">
    <location>
        <begin position="78"/>
        <end position="79"/>
    </location>
    <ligand>
        <name>NAD(+)</name>
        <dbReference type="ChEBI" id="CHEBI:57540"/>
    </ligand>
</feature>
<feature type="binding site" evidence="1">
    <location>
        <position position="107"/>
    </location>
    <ligand>
        <name>NAD(+)</name>
        <dbReference type="ChEBI" id="CHEBI:57540"/>
    </ligand>
</feature>
<feature type="binding site" evidence="1">
    <location>
        <position position="130"/>
    </location>
    <ligand>
        <name>NAD(+)</name>
        <dbReference type="ChEBI" id="CHEBI:57540"/>
    </ligand>
</feature>
<feature type="binding site" evidence="1">
    <location>
        <position position="164"/>
    </location>
    <ligand>
        <name>NAD(+)</name>
        <dbReference type="ChEBI" id="CHEBI:57540"/>
    </ligand>
</feature>
<feature type="binding site" evidence="1">
    <location>
        <position position="278"/>
    </location>
    <ligand>
        <name>NAD(+)</name>
        <dbReference type="ChEBI" id="CHEBI:57540"/>
    </ligand>
</feature>
<feature type="binding site" evidence="1">
    <location>
        <position position="302"/>
    </location>
    <ligand>
        <name>NAD(+)</name>
        <dbReference type="ChEBI" id="CHEBI:57540"/>
    </ligand>
</feature>
<feature type="binding site" evidence="1">
    <location>
        <position position="395"/>
    </location>
    <ligand>
        <name>Zn(2+)</name>
        <dbReference type="ChEBI" id="CHEBI:29105"/>
    </ligand>
</feature>
<feature type="binding site" evidence="1">
    <location>
        <position position="398"/>
    </location>
    <ligand>
        <name>Zn(2+)</name>
        <dbReference type="ChEBI" id="CHEBI:29105"/>
    </ligand>
</feature>
<feature type="binding site" evidence="1">
    <location>
        <position position="413"/>
    </location>
    <ligand>
        <name>Zn(2+)</name>
        <dbReference type="ChEBI" id="CHEBI:29105"/>
    </ligand>
</feature>
<feature type="binding site" evidence="1">
    <location>
        <position position="418"/>
    </location>
    <ligand>
        <name>Zn(2+)</name>
        <dbReference type="ChEBI" id="CHEBI:29105"/>
    </ligand>
</feature>
<sequence length="652" mass="72246">MNKRMNELVALLNRYATEYYTSDNPSVSDSEYDRLYRELVELETAYPEQVLADSPTHRVGGKVLDGFEKYSHQYPLYSLQDAFSREELDAFDARVRKEVAHPTYICELKIDGLSISLTYEKGILVAGVTRGDGSIGENITENLKRVKDIPLTLPEELDITVRGECYMPRASFDQVNQARQENGEPEFANPRNAAAGTLRQLDTAVVAKRNLATFLYQEASPSTRDSQEKGLKYLEQLGFVVNPKRILAENIDEIWNFIQEVGQERENLPYDIDGVVIKVNDLASQEELGFTVKAPKWAVAYKFPAEEKEAQLLSVDWTVGRTGVVTPTANLTPVQLAGTTVSRATLHNVDYIAEKDIRKDDTVIVYKAGDIIPAVLRVVESKRVSEEKLDIPTNCPSCNSDLLHFEDEVALRCINPRCPAQIMEGLIHFASRDAMNITGLGPSIVEKLFAANLVKDVADIYRLQEEDFLLLEGVKEKSAAKLYQAIQASKENSAEKLLFGLGIRHVGSKASQLLLQYFHSIENLYQADSEEVASIESLGGVIAKSLQTYFAAEGSEILLRELKETGVNLDYKGQTVVADAALSGLTVVLTGKLERLKRSEAKSKLESLGAKVTGSVSKKTDLVVVGADAGSKLQKAQELGIQVRDEAWLESL</sequence>